<accession>Q63118</accession>
<dbReference type="EMBL" id="X70658">
    <property type="protein sequence ID" value="CAA49997.1"/>
    <property type="molecule type" value="mRNA"/>
</dbReference>
<dbReference type="PIR" id="I60194">
    <property type="entry name" value="I60194"/>
</dbReference>
<dbReference type="RefSeq" id="NP_036849.1">
    <property type="nucleotide sequence ID" value="NM_012717.1"/>
</dbReference>
<dbReference type="RefSeq" id="XP_006234500.1">
    <property type="nucleotide sequence ID" value="XM_006234438.3"/>
</dbReference>
<dbReference type="RefSeq" id="XP_006234501.1">
    <property type="nucleotide sequence ID" value="XM_006234439.5"/>
</dbReference>
<dbReference type="SMR" id="Q63118"/>
<dbReference type="BioGRID" id="247109">
    <property type="interactions" value="4"/>
</dbReference>
<dbReference type="ComplexPortal" id="CPX-244">
    <property type="entry name" value="Adrenomedullin receptor AM1 complex"/>
</dbReference>
<dbReference type="ComplexPortal" id="CPX-245">
    <property type="entry name" value="Adrenomedullin receptor AM2 complex"/>
</dbReference>
<dbReference type="ComplexPortal" id="CPX-248">
    <property type="entry name" value="CGRP receptor complex"/>
</dbReference>
<dbReference type="FunCoup" id="Q63118">
    <property type="interactions" value="1185"/>
</dbReference>
<dbReference type="STRING" id="10116.ENSRNOP00000070720"/>
<dbReference type="BindingDB" id="Q63118"/>
<dbReference type="ChEMBL" id="CHEMBL4755"/>
<dbReference type="GuidetoPHARMACOLOGY" id="47"/>
<dbReference type="GlyCosmos" id="Q63118">
    <property type="glycosylation" value="6 sites, No reported glycans"/>
</dbReference>
<dbReference type="GlyGen" id="Q63118">
    <property type="glycosylation" value="6 sites"/>
</dbReference>
<dbReference type="iPTMnet" id="Q63118"/>
<dbReference type="PhosphoSitePlus" id="Q63118"/>
<dbReference type="PaxDb" id="10116-ENSRNOP00000006462"/>
<dbReference type="Ensembl" id="ENSRNOT00000078645.2">
    <property type="protein sequence ID" value="ENSRNOP00000074452.1"/>
    <property type="gene ID" value="ENSRNOG00000054695.2"/>
</dbReference>
<dbReference type="GeneID" id="25029"/>
<dbReference type="KEGG" id="rno:25029"/>
<dbReference type="UCSC" id="RGD:2255">
    <property type="organism name" value="rat"/>
</dbReference>
<dbReference type="AGR" id="RGD:2255"/>
<dbReference type="CTD" id="10203"/>
<dbReference type="RGD" id="2255">
    <property type="gene designation" value="Calcrl"/>
</dbReference>
<dbReference type="eggNOG" id="KOG4564">
    <property type="taxonomic scope" value="Eukaryota"/>
</dbReference>
<dbReference type="GeneTree" id="ENSGT00940000159898"/>
<dbReference type="HOGENOM" id="CLU_002753_4_2_1"/>
<dbReference type="InParanoid" id="Q63118"/>
<dbReference type="OrthoDB" id="16753at2759"/>
<dbReference type="PhylomeDB" id="Q63118"/>
<dbReference type="TreeFam" id="TF315710"/>
<dbReference type="Reactome" id="R-RNO-419812">
    <property type="pathway name" value="Calcitonin-like ligand receptors"/>
</dbReference>
<dbReference type="Reactome" id="R-RNO-9856530">
    <property type="pathway name" value="High laminar flow shear stress activates signaling by PIEZO1 and PECAM1:CDH5:KDR in endothelial cells"/>
</dbReference>
<dbReference type="PRO" id="PR:Q63118"/>
<dbReference type="Proteomes" id="UP000002494">
    <property type="component" value="Chromosome 3"/>
</dbReference>
<dbReference type="Bgee" id="ENSRNOG00000054695">
    <property type="expression patterns" value="Expressed in lung and 18 other cell types or tissues"/>
</dbReference>
<dbReference type="GO" id="GO:1903143">
    <property type="term" value="C:adrenomedullin receptor complex"/>
    <property type="evidence" value="ECO:0000266"/>
    <property type="project" value="RGD"/>
</dbReference>
<dbReference type="GO" id="GO:1990406">
    <property type="term" value="C:CGRP receptor complex"/>
    <property type="evidence" value="ECO:0000266"/>
    <property type="project" value="RGD"/>
</dbReference>
<dbReference type="GO" id="GO:0005737">
    <property type="term" value="C:cytoplasm"/>
    <property type="evidence" value="ECO:0000266"/>
    <property type="project" value="RGD"/>
</dbReference>
<dbReference type="GO" id="GO:0005783">
    <property type="term" value="C:endoplasmic reticulum"/>
    <property type="evidence" value="ECO:0000266"/>
    <property type="project" value="RGD"/>
</dbReference>
<dbReference type="GO" id="GO:0005768">
    <property type="term" value="C:endosome"/>
    <property type="evidence" value="ECO:0000266"/>
    <property type="project" value="RGD"/>
</dbReference>
<dbReference type="GO" id="GO:0005764">
    <property type="term" value="C:lysosome"/>
    <property type="evidence" value="ECO:0000266"/>
    <property type="project" value="RGD"/>
</dbReference>
<dbReference type="GO" id="GO:0098992">
    <property type="term" value="C:neuronal dense core vesicle"/>
    <property type="evidence" value="ECO:0000314"/>
    <property type="project" value="SynGO"/>
</dbReference>
<dbReference type="GO" id="GO:0005886">
    <property type="term" value="C:plasma membrane"/>
    <property type="evidence" value="ECO:0000266"/>
    <property type="project" value="RGD"/>
</dbReference>
<dbReference type="GO" id="GO:0008021">
    <property type="term" value="C:synaptic vesicle"/>
    <property type="evidence" value="ECO:0000314"/>
    <property type="project" value="SynGO"/>
</dbReference>
<dbReference type="GO" id="GO:1990409">
    <property type="term" value="F:adrenomedullin binding"/>
    <property type="evidence" value="ECO:0000266"/>
    <property type="project" value="RGD"/>
</dbReference>
<dbReference type="GO" id="GO:0001605">
    <property type="term" value="F:adrenomedullin receptor activity"/>
    <property type="evidence" value="ECO:0000266"/>
    <property type="project" value="RGD"/>
</dbReference>
<dbReference type="GO" id="GO:0001635">
    <property type="term" value="F:calcitonin gene-related peptide receptor activity"/>
    <property type="evidence" value="ECO:0000266"/>
    <property type="project" value="RGD"/>
</dbReference>
<dbReference type="GO" id="GO:0004948">
    <property type="term" value="F:calcitonin receptor activity"/>
    <property type="evidence" value="ECO:0007669"/>
    <property type="project" value="InterPro"/>
</dbReference>
<dbReference type="GO" id="GO:0007189">
    <property type="term" value="P:adenylate cyclase-activating G protein-coupled receptor signaling pathway"/>
    <property type="evidence" value="ECO:0000266"/>
    <property type="project" value="RGD"/>
</dbReference>
<dbReference type="GO" id="GO:1990410">
    <property type="term" value="P:adrenomedullin receptor signaling pathway"/>
    <property type="evidence" value="ECO:0000266"/>
    <property type="project" value="RGD"/>
</dbReference>
<dbReference type="GO" id="GO:0001525">
    <property type="term" value="P:angiogenesis"/>
    <property type="evidence" value="ECO:0000266"/>
    <property type="project" value="RGD"/>
</dbReference>
<dbReference type="GO" id="GO:1990408">
    <property type="term" value="P:calcitonin gene-related peptide receptor signaling pathway"/>
    <property type="evidence" value="ECO:0000266"/>
    <property type="project" value="RGD"/>
</dbReference>
<dbReference type="GO" id="GO:0006816">
    <property type="term" value="P:calcium ion transport"/>
    <property type="evidence" value="ECO:0000266"/>
    <property type="project" value="RGD"/>
</dbReference>
<dbReference type="GO" id="GO:0008283">
    <property type="term" value="P:cell population proliferation"/>
    <property type="evidence" value="ECO:0000266"/>
    <property type="project" value="RGD"/>
</dbReference>
<dbReference type="GO" id="GO:0007166">
    <property type="term" value="P:cell surface receptor signaling pathway"/>
    <property type="evidence" value="ECO:0007669"/>
    <property type="project" value="InterPro"/>
</dbReference>
<dbReference type="GO" id="GO:0071329">
    <property type="term" value="P:cellular response to sucrose stimulus"/>
    <property type="evidence" value="ECO:0000266"/>
    <property type="project" value="RGD"/>
</dbReference>
<dbReference type="GO" id="GO:0007507">
    <property type="term" value="P:heart development"/>
    <property type="evidence" value="ECO:0000266"/>
    <property type="project" value="RGD"/>
</dbReference>
<dbReference type="GO" id="GO:0045986">
    <property type="term" value="P:negative regulation of smooth muscle contraction"/>
    <property type="evidence" value="ECO:0000315"/>
    <property type="project" value="RGD"/>
</dbReference>
<dbReference type="GO" id="GO:0008284">
    <property type="term" value="P:positive regulation of cell population proliferation"/>
    <property type="evidence" value="ECO:0000266"/>
    <property type="project" value="RGD"/>
</dbReference>
<dbReference type="GO" id="GO:1904707">
    <property type="term" value="P:positive regulation of vascular associated smooth muscle cell proliferation"/>
    <property type="evidence" value="ECO:0000266"/>
    <property type="project" value="RGD"/>
</dbReference>
<dbReference type="GO" id="GO:0015031">
    <property type="term" value="P:protein transport"/>
    <property type="evidence" value="ECO:0000266"/>
    <property type="project" value="RGD"/>
</dbReference>
<dbReference type="GO" id="GO:0031623">
    <property type="term" value="P:receptor internalization"/>
    <property type="evidence" value="ECO:0000266"/>
    <property type="project" value="RGD"/>
</dbReference>
<dbReference type="GO" id="GO:0048659">
    <property type="term" value="P:smooth muscle cell proliferation"/>
    <property type="evidence" value="ECO:0000266"/>
    <property type="project" value="RGD"/>
</dbReference>
<dbReference type="GO" id="GO:1990874">
    <property type="term" value="P:vascular associated smooth muscle cell proliferation"/>
    <property type="evidence" value="ECO:0000266"/>
    <property type="project" value="RGD"/>
</dbReference>
<dbReference type="CDD" id="cd15274">
    <property type="entry name" value="7tmB1_calcitonin_R"/>
    <property type="match status" value="1"/>
</dbReference>
<dbReference type="FunFam" id="1.20.1070.10:FF:000079">
    <property type="entry name" value="Calcitonin gene-related peptide type 1 receptor"/>
    <property type="match status" value="1"/>
</dbReference>
<dbReference type="FunFam" id="4.10.1240.10:FF:000011">
    <property type="entry name" value="Calcitonin gene-related peptide type 1 receptor"/>
    <property type="match status" value="1"/>
</dbReference>
<dbReference type="Gene3D" id="4.10.1240.10">
    <property type="entry name" value="GPCR, family 2, extracellular hormone receptor domain"/>
    <property type="match status" value="1"/>
</dbReference>
<dbReference type="Gene3D" id="1.20.1070.10">
    <property type="entry name" value="Rhodopsin 7-helix transmembrane proteins"/>
    <property type="match status" value="1"/>
</dbReference>
<dbReference type="InterPro" id="IPR050332">
    <property type="entry name" value="GPCR_2"/>
</dbReference>
<dbReference type="InterPro" id="IPR017981">
    <property type="entry name" value="GPCR_2-like_7TM"/>
</dbReference>
<dbReference type="InterPro" id="IPR003287">
    <property type="entry name" value="GPCR_2_calcitonin_rcpt_fam"/>
</dbReference>
<dbReference type="InterPro" id="IPR003289">
    <property type="entry name" value="GPCR_2_CGRP1_rcpt"/>
</dbReference>
<dbReference type="InterPro" id="IPR036445">
    <property type="entry name" value="GPCR_2_extracell_dom_sf"/>
</dbReference>
<dbReference type="InterPro" id="IPR001879">
    <property type="entry name" value="GPCR_2_extracellular_dom"/>
</dbReference>
<dbReference type="InterPro" id="IPR000832">
    <property type="entry name" value="GPCR_2_secretin-like"/>
</dbReference>
<dbReference type="InterPro" id="IPR017983">
    <property type="entry name" value="GPCR_2_secretin-like_CS"/>
</dbReference>
<dbReference type="PANTHER" id="PTHR45620:SF21">
    <property type="entry name" value="CALCITONIN GENE-RELATED PEPTIDE TYPE 1 RECEPTOR"/>
    <property type="match status" value="1"/>
</dbReference>
<dbReference type="PANTHER" id="PTHR45620">
    <property type="entry name" value="PDF RECEPTOR-LIKE PROTEIN-RELATED"/>
    <property type="match status" value="1"/>
</dbReference>
<dbReference type="Pfam" id="PF00002">
    <property type="entry name" value="7tm_2"/>
    <property type="match status" value="1"/>
</dbReference>
<dbReference type="Pfam" id="PF02793">
    <property type="entry name" value="HRM"/>
    <property type="match status" value="1"/>
</dbReference>
<dbReference type="PRINTS" id="PR01351">
    <property type="entry name" value="CGRPRECEPTOR"/>
</dbReference>
<dbReference type="PRINTS" id="PR01350">
    <property type="entry name" value="CTRFAMILY"/>
</dbReference>
<dbReference type="PRINTS" id="PR00249">
    <property type="entry name" value="GPCRSECRETIN"/>
</dbReference>
<dbReference type="SMART" id="SM00008">
    <property type="entry name" value="HormR"/>
    <property type="match status" value="1"/>
</dbReference>
<dbReference type="SUPFAM" id="SSF81321">
    <property type="entry name" value="Family A G protein-coupled receptor-like"/>
    <property type="match status" value="1"/>
</dbReference>
<dbReference type="SUPFAM" id="SSF111418">
    <property type="entry name" value="Hormone receptor domain"/>
    <property type="match status" value="1"/>
</dbReference>
<dbReference type="PROSITE" id="PS00649">
    <property type="entry name" value="G_PROTEIN_RECEP_F2_1"/>
    <property type="match status" value="1"/>
</dbReference>
<dbReference type="PROSITE" id="PS00650">
    <property type="entry name" value="G_PROTEIN_RECEP_F2_2"/>
    <property type="match status" value="1"/>
</dbReference>
<dbReference type="PROSITE" id="PS50227">
    <property type="entry name" value="G_PROTEIN_RECEP_F2_3"/>
    <property type="match status" value="1"/>
</dbReference>
<dbReference type="PROSITE" id="PS50261">
    <property type="entry name" value="G_PROTEIN_RECEP_F2_4"/>
    <property type="match status" value="1"/>
</dbReference>
<evidence type="ECO:0000250" key="1">
    <source>
        <dbReference type="UniProtKB" id="Q16602"/>
    </source>
</evidence>
<evidence type="ECO:0000250" key="2">
    <source>
        <dbReference type="UniProtKB" id="Q9R1W5"/>
    </source>
</evidence>
<evidence type="ECO:0000255" key="3"/>
<evidence type="ECO:0000305" key="4"/>
<evidence type="ECO:0000312" key="5">
    <source>
        <dbReference type="RGD" id="2255"/>
    </source>
</evidence>
<sequence>MMDKKCTLCFLFLLLLNMALIAAESEEGANQTDLGVTRNKIMTAQYECYQKIMQDPIQQGEGLYCNRTWDGWLCWNDVAAGTESMQYCPDYFQDFDPSEKVTKICDQDGNWFRHPDSNRTWTNYTLCNNSTHEKVKTALNLFYLTIIGHGLSIASLIISLIIFFYFKSLSCQRITLHKNLFFSFVCNSIVTIIHLTAVANNQALVATNPVSCKVSQFIHLYLMGCNYFWMLCEGIYLHTLIVVAVFAEKQHLMWYYFLGWGFPLLPACIHAIARSLYYNDNCWISSDTHLLYIIHGPICAALLVNLFFLLNIVRVLITKLKVTHQAESNLYMKAVRATLILVPLLGIEFVLFPWRPEGKVAEEVYDYVMHILMHYQGLLVSTIFCFFNGEVQAILRRNWNQYKIQFGNGFSHSDALRSASYTVSTISDVQGYSHDCPTEHLNGKSIQDIENVALKPEKMYDLVM</sequence>
<protein>
    <recommendedName>
        <fullName>Calcitonin gene-related peptide type 1 receptor</fullName>
        <shortName>CGRP type 1 receptor</shortName>
    </recommendedName>
    <alternativeName>
        <fullName>Calcitonin receptor-like receptor</fullName>
    </alternativeName>
</protein>
<proteinExistence type="evidence at transcript level"/>
<keyword id="KW-1003">Cell membrane</keyword>
<keyword id="KW-1015">Disulfide bond</keyword>
<keyword id="KW-0297">G-protein coupled receptor</keyword>
<keyword id="KW-0325">Glycoprotein</keyword>
<keyword id="KW-0472">Membrane</keyword>
<keyword id="KW-0597">Phosphoprotein</keyword>
<keyword id="KW-0675">Receptor</keyword>
<keyword id="KW-1185">Reference proteome</keyword>
<keyword id="KW-0732">Signal</keyword>
<keyword id="KW-0807">Transducer</keyword>
<keyword id="KW-0812">Transmembrane</keyword>
<keyword id="KW-1133">Transmembrane helix</keyword>
<reference key="1">
    <citation type="journal article" date="1993" name="Clin. Sci.">
        <title>A new calcitonin-receptor-like sequence in rat pulmonary blood vessels.</title>
        <authorList>
            <person name="Njuki F."/>
            <person name="Nicholl C.G."/>
            <person name="Howard A."/>
            <person name="Mak J.C."/>
            <person name="Barnes P.J."/>
            <person name="Girgis S.I."/>
            <person name="Legon S."/>
        </authorList>
    </citation>
    <scope>NUCLEOTIDE SEQUENCE [MRNA]</scope>
    <source>
        <strain>Wistar</strain>
        <tissue>Lung</tissue>
    </source>
</reference>
<feature type="signal peptide" evidence="3">
    <location>
        <begin position="1"/>
        <end position="23"/>
    </location>
</feature>
<feature type="chain" id="PRO_0000012813" description="Calcitonin gene-related peptide type 1 receptor">
    <location>
        <begin position="24"/>
        <end position="464"/>
    </location>
</feature>
<feature type="topological domain" description="Extracellular" evidence="4">
    <location>
        <begin position="24"/>
        <end position="139"/>
    </location>
</feature>
<feature type="transmembrane region" description="Helical; Name=1" evidence="1">
    <location>
        <begin position="140"/>
        <end position="164"/>
    </location>
</feature>
<feature type="topological domain" description="Cytoplasmic" evidence="4">
    <location>
        <begin position="165"/>
        <end position="175"/>
    </location>
</feature>
<feature type="transmembrane region" description="Helical; Name=2" evidence="1">
    <location>
        <begin position="176"/>
        <end position="198"/>
    </location>
</feature>
<feature type="topological domain" description="Extracellular" evidence="4">
    <location>
        <begin position="199"/>
        <end position="209"/>
    </location>
</feature>
<feature type="transmembrane region" description="Helical; Name=3" evidence="1">
    <location>
        <begin position="210"/>
        <end position="238"/>
    </location>
</feature>
<feature type="topological domain" description="Cytoplasmic" evidence="4">
    <location>
        <begin position="239"/>
        <end position="252"/>
    </location>
</feature>
<feature type="transmembrane region" description="Helical; Name=4" evidence="1">
    <location>
        <begin position="253"/>
        <end position="273"/>
    </location>
</feature>
<feature type="topological domain" description="Extracellular" evidence="4">
    <location>
        <begin position="274"/>
        <end position="289"/>
    </location>
</feature>
<feature type="transmembrane region" description="Helical; Name=5" evidence="1">
    <location>
        <begin position="290"/>
        <end position="314"/>
    </location>
</feature>
<feature type="topological domain" description="Cytoplasmic" evidence="4">
    <location>
        <begin position="315"/>
        <end position="329"/>
    </location>
</feature>
<feature type="transmembrane region" description="Helical; Name=6" evidence="1">
    <location>
        <begin position="330"/>
        <end position="351"/>
    </location>
</feature>
<feature type="topological domain" description="Extracellular" evidence="4">
    <location>
        <begin position="352"/>
        <end position="366"/>
    </location>
</feature>
<feature type="transmembrane region" description="Helical; Name=7" evidence="1">
    <location>
        <begin position="367"/>
        <end position="387"/>
    </location>
</feature>
<feature type="topological domain" description="Cytoplasmic" evidence="4">
    <location>
        <begin position="388"/>
        <end position="464"/>
    </location>
</feature>
<feature type="region of interest" description="Required for RAMP3 interaction" evidence="1">
    <location>
        <begin position="288"/>
        <end position="289"/>
    </location>
</feature>
<feature type="site" description="Required for ADM interaction" evidence="1">
    <location>
        <position position="202"/>
    </location>
</feature>
<feature type="site" description="Required for RAMP3 interaction" evidence="1">
    <location>
        <position position="250"/>
    </location>
</feature>
<feature type="site" description="Required for ADM2 interaction" evidence="1">
    <location>
        <position position="286"/>
    </location>
</feature>
<feature type="site" description="Required for RAMP2 interaction" evidence="1">
    <location>
        <position position="288"/>
    </location>
</feature>
<feature type="site" description="Required for ADM2 interaction" evidence="1">
    <location>
        <position position="295"/>
    </location>
</feature>
<feature type="site" description="Required for ADM2 interaction" evidence="1">
    <location>
        <position position="354"/>
    </location>
</feature>
<feature type="site" description="Required for ADM interaction" evidence="1">
    <location>
        <position position="373"/>
    </location>
</feature>
<feature type="modified residue" description="Phosphoserine" evidence="2">
    <location>
        <position position="420"/>
    </location>
</feature>
<feature type="modified residue" description="Phosphoserine" evidence="2">
    <location>
        <position position="445"/>
    </location>
</feature>
<feature type="glycosylation site" description="N-linked (GlcNAc...) asparagine" evidence="3">
    <location>
        <position position="30"/>
    </location>
</feature>
<feature type="glycosylation site" description="N-linked (GlcNAc...) asparagine" evidence="3">
    <location>
        <position position="66"/>
    </location>
</feature>
<feature type="glycosylation site" description="N-linked (GlcNAc...) asparagine" evidence="3">
    <location>
        <position position="118"/>
    </location>
</feature>
<feature type="glycosylation site" description="N-linked (GlcNAc...) asparagine" evidence="3">
    <location>
        <position position="123"/>
    </location>
</feature>
<feature type="glycosylation site" description="N-linked (GlcNAc...) asparagine" evidence="3">
    <location>
        <position position="128"/>
    </location>
</feature>
<feature type="glycosylation site" description="N-linked (GlcNAc...) asparagine" evidence="3">
    <location>
        <position position="129"/>
    </location>
</feature>
<feature type="disulfide bond" evidence="1">
    <location>
        <begin position="48"/>
        <end position="74"/>
    </location>
</feature>
<feature type="disulfide bond" evidence="1">
    <location>
        <begin position="65"/>
        <end position="105"/>
    </location>
</feature>
<feature type="disulfide bond" evidence="1">
    <location>
        <begin position="88"/>
        <end position="127"/>
    </location>
</feature>
<name>CALRL_RAT</name>
<organism>
    <name type="scientific">Rattus norvegicus</name>
    <name type="common">Rat</name>
    <dbReference type="NCBI Taxonomy" id="10116"/>
    <lineage>
        <taxon>Eukaryota</taxon>
        <taxon>Metazoa</taxon>
        <taxon>Chordata</taxon>
        <taxon>Craniata</taxon>
        <taxon>Vertebrata</taxon>
        <taxon>Euteleostomi</taxon>
        <taxon>Mammalia</taxon>
        <taxon>Eutheria</taxon>
        <taxon>Euarchontoglires</taxon>
        <taxon>Glires</taxon>
        <taxon>Rodentia</taxon>
        <taxon>Myomorpha</taxon>
        <taxon>Muroidea</taxon>
        <taxon>Muridae</taxon>
        <taxon>Murinae</taxon>
        <taxon>Rattus</taxon>
    </lineage>
</organism>
<comment type="function">
    <text evidence="1">G protein-coupled receptor which specificity is determined by its interaction with receptor-activity-modifying proteins (RAMPs). Together with RAMP1, form the receptor complex for calcitonin-gene-related peptides CALCA/CGRP1 and CALCB/CGRP2. Together with RAMP2 or RAMP3, function as receptor complexes for adrenomedullin (ADM and ADM2). Ligand binding causes a conformation change that triggers signaling via guanine nucleotide-binding proteins (G proteins) and modulates the activity of downstream effectors. Activates cAMP-dependent pathway.</text>
</comment>
<comment type="subunit">
    <text evidence="1">Heterodimer of CALCRL and RAMP1; the receptor complex functions as CGRP receptor. Heterodimer of CALCRL and RAMP2 or CALCRL and RAMP3; the complexes function as adrenomedullin receptor.</text>
</comment>
<comment type="subcellular location">
    <subcellularLocation>
        <location evidence="1">Cell membrane</location>
        <topology evidence="1">Multi-pass membrane protein</topology>
    </subcellularLocation>
</comment>
<comment type="similarity">
    <text evidence="4">Belongs to the G-protein coupled receptor 2 family.</text>
</comment>
<gene>
    <name evidence="5" type="primary">Calcrl</name>
    <name type="synonym">Cgrpr</name>
</gene>